<comment type="function">
    <text evidence="1">RNA chaperone that binds small regulatory RNA (sRNAs) and mRNAs to facilitate mRNA translational regulation in response to envelope stress, environmental stress and changes in metabolite concentrations. Also binds with high specificity to tRNAs.</text>
</comment>
<comment type="subunit">
    <text evidence="1">Homohexamer.</text>
</comment>
<comment type="similarity">
    <text evidence="1">Belongs to the Hfq family.</text>
</comment>
<organism>
    <name type="scientific">Wigglesworthia glossinidia brevipalpis</name>
    <dbReference type="NCBI Taxonomy" id="36870"/>
    <lineage>
        <taxon>Bacteria</taxon>
        <taxon>Pseudomonadati</taxon>
        <taxon>Pseudomonadota</taxon>
        <taxon>Gammaproteobacteria</taxon>
        <taxon>Enterobacterales</taxon>
        <taxon>Erwiniaceae</taxon>
        <taxon>Wigglesworthia</taxon>
    </lineage>
</organism>
<accession>Q8D317</accession>
<keyword id="KW-1185">Reference proteome</keyword>
<keyword id="KW-0694">RNA-binding</keyword>
<keyword id="KW-0346">Stress response</keyword>
<gene>
    <name evidence="1" type="primary">hfq</name>
    <name type="ordered locus">WIGBR1840</name>
</gene>
<sequence>MAKGQSLQDPFLNTLRRERIPVSIYLVNGIKLQGYIESFDQFVILLKNSISQMIYKHAISTVVPNHTNNQEHNQSQYNNNNACISKP</sequence>
<protein>
    <recommendedName>
        <fullName evidence="1">RNA-binding protein Hfq</fullName>
    </recommendedName>
</protein>
<proteinExistence type="inferred from homology"/>
<dbReference type="EMBL" id="BA000021">
    <property type="protein sequence ID" value="BAC24330.1"/>
    <property type="molecule type" value="Genomic_DNA"/>
</dbReference>
<dbReference type="SMR" id="Q8D317"/>
<dbReference type="STRING" id="36870.gene:10368672"/>
<dbReference type="KEGG" id="wbr:hfq"/>
<dbReference type="eggNOG" id="COG1923">
    <property type="taxonomic scope" value="Bacteria"/>
</dbReference>
<dbReference type="HOGENOM" id="CLU_113688_2_2_6"/>
<dbReference type="OrthoDB" id="9799751at2"/>
<dbReference type="Proteomes" id="UP000000562">
    <property type="component" value="Chromosome"/>
</dbReference>
<dbReference type="GO" id="GO:0005829">
    <property type="term" value="C:cytosol"/>
    <property type="evidence" value="ECO:0007669"/>
    <property type="project" value="TreeGrafter"/>
</dbReference>
<dbReference type="GO" id="GO:0003723">
    <property type="term" value="F:RNA binding"/>
    <property type="evidence" value="ECO:0007669"/>
    <property type="project" value="UniProtKB-UniRule"/>
</dbReference>
<dbReference type="GO" id="GO:0006355">
    <property type="term" value="P:regulation of DNA-templated transcription"/>
    <property type="evidence" value="ECO:0007669"/>
    <property type="project" value="InterPro"/>
</dbReference>
<dbReference type="GO" id="GO:0043487">
    <property type="term" value="P:regulation of RNA stability"/>
    <property type="evidence" value="ECO:0007669"/>
    <property type="project" value="TreeGrafter"/>
</dbReference>
<dbReference type="GO" id="GO:0045974">
    <property type="term" value="P:regulation of translation, ncRNA-mediated"/>
    <property type="evidence" value="ECO:0007669"/>
    <property type="project" value="TreeGrafter"/>
</dbReference>
<dbReference type="CDD" id="cd01716">
    <property type="entry name" value="Hfq"/>
    <property type="match status" value="1"/>
</dbReference>
<dbReference type="FunFam" id="2.30.30.100:FF:000001">
    <property type="entry name" value="RNA-binding protein Hfq"/>
    <property type="match status" value="1"/>
</dbReference>
<dbReference type="Gene3D" id="2.30.30.100">
    <property type="match status" value="1"/>
</dbReference>
<dbReference type="HAMAP" id="MF_00436">
    <property type="entry name" value="Hfq"/>
    <property type="match status" value="1"/>
</dbReference>
<dbReference type="InterPro" id="IPR005001">
    <property type="entry name" value="Hfq"/>
</dbReference>
<dbReference type="InterPro" id="IPR010920">
    <property type="entry name" value="LSM_dom_sf"/>
</dbReference>
<dbReference type="InterPro" id="IPR047575">
    <property type="entry name" value="Sm"/>
</dbReference>
<dbReference type="NCBIfam" id="TIGR02383">
    <property type="entry name" value="Hfq"/>
    <property type="match status" value="1"/>
</dbReference>
<dbReference type="NCBIfam" id="NF001602">
    <property type="entry name" value="PRK00395.1"/>
    <property type="match status" value="1"/>
</dbReference>
<dbReference type="PANTHER" id="PTHR34772">
    <property type="entry name" value="RNA-BINDING PROTEIN HFQ"/>
    <property type="match status" value="1"/>
</dbReference>
<dbReference type="PANTHER" id="PTHR34772:SF1">
    <property type="entry name" value="RNA-BINDING PROTEIN HFQ"/>
    <property type="match status" value="1"/>
</dbReference>
<dbReference type="Pfam" id="PF17209">
    <property type="entry name" value="Hfq"/>
    <property type="match status" value="1"/>
</dbReference>
<dbReference type="SUPFAM" id="SSF50182">
    <property type="entry name" value="Sm-like ribonucleoproteins"/>
    <property type="match status" value="1"/>
</dbReference>
<dbReference type="PROSITE" id="PS52002">
    <property type="entry name" value="SM"/>
    <property type="match status" value="1"/>
</dbReference>
<evidence type="ECO:0000255" key="1">
    <source>
        <dbReference type="HAMAP-Rule" id="MF_00436"/>
    </source>
</evidence>
<evidence type="ECO:0000255" key="2">
    <source>
        <dbReference type="PROSITE-ProRule" id="PRU01346"/>
    </source>
</evidence>
<evidence type="ECO:0000256" key="3">
    <source>
        <dbReference type="SAM" id="MobiDB-lite"/>
    </source>
</evidence>
<feature type="chain" id="PRO_0000095670" description="RNA-binding protein Hfq">
    <location>
        <begin position="1"/>
        <end position="87"/>
    </location>
</feature>
<feature type="domain" description="Sm" evidence="2">
    <location>
        <begin position="9"/>
        <end position="68"/>
    </location>
</feature>
<feature type="region of interest" description="Disordered" evidence="3">
    <location>
        <begin position="66"/>
        <end position="87"/>
    </location>
</feature>
<name>HFQ_WIGBR</name>
<reference key="1">
    <citation type="journal article" date="2002" name="Nat. Genet.">
        <title>Genome sequence of the endocellular obligate symbiont of tsetse flies, Wigglesworthia glossinidia.</title>
        <authorList>
            <person name="Akman L."/>
            <person name="Yamashita A."/>
            <person name="Watanabe H."/>
            <person name="Oshima K."/>
            <person name="Shiba T."/>
            <person name="Hattori M."/>
            <person name="Aksoy S."/>
        </authorList>
    </citation>
    <scope>NUCLEOTIDE SEQUENCE [LARGE SCALE GENOMIC DNA]</scope>
</reference>